<protein>
    <recommendedName>
        <fullName>Protein Tat</fullName>
    </recommendedName>
    <alternativeName>
        <fullName>Transactivating regulatory protein</fullName>
    </alternativeName>
</protein>
<sequence>MEPSGKEDHNCPPQDSGQEEIDYKQLLEEYYQPLQACENKCWCKKCCFHCMLCFQKKGLGIRYHVYRKRVPGTNKKIPGSGEEAIRRAIDLSFHRTASRTYTANGQTTEKKKATA</sequence>
<organism>
    <name type="scientific">Simian immunodeficiency virus (isolate GB1)</name>
    <name type="common">SIV-mnd</name>
    <name type="synonym">Simian immunodeficiency virus mandrill</name>
    <dbReference type="NCBI Taxonomy" id="11732"/>
    <lineage>
        <taxon>Viruses</taxon>
        <taxon>Riboviria</taxon>
        <taxon>Pararnavirae</taxon>
        <taxon>Artverviricota</taxon>
        <taxon>Revtraviricetes</taxon>
        <taxon>Ortervirales</taxon>
        <taxon>Retroviridae</taxon>
        <taxon>Orthoretrovirinae</taxon>
        <taxon>Lentivirus</taxon>
        <taxon>Simian immunodeficiency virus</taxon>
    </lineage>
</organism>
<feature type="chain" id="PRO_0000085381" description="Protein Tat">
    <location>
        <begin position="1"/>
        <end position="115"/>
    </location>
</feature>
<feature type="region of interest" description="Cysteine-rich" evidence="1">
    <location>
        <begin position="37"/>
        <end position="53"/>
    </location>
</feature>
<feature type="region of interest" description="Core" evidence="1">
    <location>
        <begin position="54"/>
        <end position="64"/>
    </location>
</feature>
<feature type="short sequence motif" description="Nuclear localization signal, and RNA-binding (TAR)" evidence="3">
    <location>
        <begin position="65"/>
        <end position="73"/>
    </location>
</feature>
<feature type="mutagenesis site" description="Loss of binding to cyclin T." evidence="4">
    <original>C</original>
    <variation>S</variation>
    <location>
        <position position="37"/>
    </location>
</feature>
<keyword id="KW-0010">Activator</keyword>
<keyword id="KW-1048">Host nucleus</keyword>
<keyword id="KW-0945">Host-virus interaction</keyword>
<keyword id="KW-0694">RNA-binding</keyword>
<keyword id="KW-0804">Transcription</keyword>
<keyword id="KW-0805">Transcription regulation</keyword>
<reference key="1">
    <citation type="journal article" date="1989" name="Nature">
        <title>Sequence of a novel simian immunodeficiency virus from a wild-caught African mandrill.</title>
        <authorList>
            <person name="Tsujimoto H."/>
            <person name="Hasegawa A."/>
            <person name="Maki N."/>
            <person name="Fukasawa M."/>
            <person name="Miura T."/>
            <person name="Speidel S."/>
            <person name="Cooper R.W."/>
            <person name="Moriyama E.N."/>
            <person name="Gojobori T."/>
            <person name="Hayami M."/>
        </authorList>
    </citation>
    <scope>NUCLEOTIDE SEQUENCE [GENOMIC RNA]</scope>
</reference>
<reference key="2">
    <citation type="journal article" date="1999" name="J. Virol.">
        <title>Analysis of the effect of natural sequence variation in Tat and in cyclin T on the formation and RNA binding properties of Tat-cyclin T complexes.</title>
        <authorList>
            <person name="Bieniasz P.D."/>
            <person name="Grdina T.A."/>
            <person name="Bogerd H.P."/>
            <person name="Cullen B.R."/>
        </authorList>
    </citation>
    <scope>MUTAGENESIS OF CYS-37</scope>
    <scope>INTERACTION WITH HUMAN CCNT1</scope>
</reference>
<dbReference type="EMBL" id="M27470">
    <property type="protein sequence ID" value="AAB49572.1"/>
    <property type="molecule type" value="Genomic_RNA"/>
</dbReference>
<dbReference type="Proteomes" id="UP000259373">
    <property type="component" value="Segment"/>
</dbReference>
<dbReference type="GO" id="GO:0044196">
    <property type="term" value="C:host cell nucleolus"/>
    <property type="evidence" value="ECO:0007669"/>
    <property type="project" value="UniProtKB-SubCell"/>
</dbReference>
<dbReference type="GO" id="GO:0003723">
    <property type="term" value="F:RNA binding"/>
    <property type="evidence" value="ECO:0007669"/>
    <property type="project" value="UniProtKB-KW"/>
</dbReference>
<dbReference type="GO" id="GO:0001070">
    <property type="term" value="F:RNA-binding transcription regulator activity"/>
    <property type="evidence" value="ECO:0007669"/>
    <property type="project" value="InterPro"/>
</dbReference>
<dbReference type="GO" id="GO:0050434">
    <property type="term" value="P:positive regulation of viral transcription"/>
    <property type="evidence" value="ECO:0007669"/>
    <property type="project" value="InterPro"/>
</dbReference>
<dbReference type="Gene3D" id="4.10.20.10">
    <property type="entry name" value="Tat domain"/>
    <property type="match status" value="1"/>
</dbReference>
<dbReference type="InterPro" id="IPR001831">
    <property type="entry name" value="IV_Tat"/>
</dbReference>
<dbReference type="InterPro" id="IPR036963">
    <property type="entry name" value="Tat_dom_sf"/>
</dbReference>
<dbReference type="Pfam" id="PF00539">
    <property type="entry name" value="Tat"/>
    <property type="match status" value="1"/>
</dbReference>
<comment type="function">
    <text evidence="2">Transcriptional activator that increases RNA Pol II processivity, thereby increasing the level of full-length viral transcripts. Recognizes a hairpin structure at the 5'-LTR of the nascent viral mRNAs referred to as the transactivation responsive RNA element (TAR) and recruits the cyclin T1-CDK9 complex (P-TEFb complex) that will in turn hyperphosphorylate the RNA polymerase II to allow efficient elongation. The CDK9 component of P-TEFb and other Tat-activated kinases hyperphosphorylate the C-terminus of RNA Pol II that becomes stabilized and much more processive.</text>
</comment>
<comment type="function">
    <text evidence="1">Extracellular circulating Tat can be endocytosed by surrounding uninfected cells via the binding to several surface receptors. Endosomal low pH allows Tat to cross the endosome membrane to enter the cytosol and eventually further translocate into the nucleus, thereby inducing severe cell dysfunctions ranging from cell activation to cell death. Through (By similarity).</text>
</comment>
<comment type="subunit">
    <text evidence="1">Interacts with host CCNT1. Associates with the P-TEFb complex composed at least of Tat, P-TEFb (CDK9 and CCNT1), TAR RNA, RNA Pol II. Interacts with CCNT2; the resulting complex is unable to bind to TAR RNA (By similarity).</text>
</comment>
<comment type="subcellular location">
    <subcellularLocation>
        <location evidence="1">Host nucleus</location>
        <location evidence="1">Host nucleolus</location>
    </subcellularLocation>
</comment>
<comment type="similarity">
    <text evidence="5">Belongs to the lentiviruses Tat family.</text>
</comment>
<evidence type="ECO:0000250" key="1"/>
<evidence type="ECO:0000250" key="2">
    <source>
        <dbReference type="UniProtKB" id="P04608"/>
    </source>
</evidence>
<evidence type="ECO:0000255" key="3"/>
<evidence type="ECO:0000269" key="4">
    <source>
    </source>
</evidence>
<evidence type="ECO:0000305" key="5"/>
<accession>P22384</accession>
<gene>
    <name type="primary">tat</name>
</gene>
<proteinExistence type="evidence at protein level"/>
<organismHost>
    <name type="scientific">Cercopithecidae</name>
    <name type="common">Old World monkeys</name>
    <dbReference type="NCBI Taxonomy" id="9527"/>
</organismHost>
<name>TAT_SIVGB</name>